<comment type="function">
    <text evidence="1">Involved in the synthesis of autoinducer 2 (AI-2) which is secreted by bacteria and is used to communicate both the cell density and the metabolic potential of the environment. The regulation of gene expression in response to changes in cell density is called quorum sensing. Catalyzes the transformation of S-ribosylhomocysteine (RHC) to homocysteine (HC) and 4,5-dihydroxy-2,3-pentadione (DPD).</text>
</comment>
<comment type="catalytic activity">
    <reaction evidence="1">
        <text>S-(5-deoxy-D-ribos-5-yl)-L-homocysteine = (S)-4,5-dihydroxypentane-2,3-dione + L-homocysteine</text>
        <dbReference type="Rhea" id="RHEA:17753"/>
        <dbReference type="ChEBI" id="CHEBI:29484"/>
        <dbReference type="ChEBI" id="CHEBI:58195"/>
        <dbReference type="ChEBI" id="CHEBI:58199"/>
        <dbReference type="EC" id="4.4.1.21"/>
    </reaction>
</comment>
<comment type="cofactor">
    <cofactor evidence="1">
        <name>Fe cation</name>
        <dbReference type="ChEBI" id="CHEBI:24875"/>
    </cofactor>
    <text evidence="1">Binds 1 Fe cation per subunit.</text>
</comment>
<comment type="subunit">
    <text evidence="1">Homodimer.</text>
</comment>
<comment type="similarity">
    <text evidence="1">Belongs to the LuxS family.</text>
</comment>
<reference key="1">
    <citation type="journal article" date="2003" name="Lancet">
        <title>Genome sequence of Vibrio parahaemolyticus: a pathogenic mechanism distinct from that of V. cholerae.</title>
        <authorList>
            <person name="Makino K."/>
            <person name="Oshima K."/>
            <person name="Kurokawa K."/>
            <person name="Yokoyama K."/>
            <person name="Uda T."/>
            <person name="Tagomori K."/>
            <person name="Iijima Y."/>
            <person name="Najima M."/>
            <person name="Nakano M."/>
            <person name="Yamashita A."/>
            <person name="Kubota Y."/>
            <person name="Kimura S."/>
            <person name="Yasunaga T."/>
            <person name="Honda T."/>
            <person name="Shinagawa H."/>
            <person name="Hattori M."/>
            <person name="Iida T."/>
        </authorList>
    </citation>
    <scope>NUCLEOTIDE SEQUENCE [LARGE SCALE GENOMIC DNA]</scope>
    <source>
        <strain>RIMD 2210633</strain>
    </source>
</reference>
<protein>
    <recommendedName>
        <fullName evidence="1">S-ribosylhomocysteine lyase</fullName>
        <ecNumber evidence="1">4.4.1.21</ecNumber>
    </recommendedName>
    <alternativeName>
        <fullName evidence="1">AI-2 synthesis protein</fullName>
    </alternativeName>
    <alternativeName>
        <fullName evidence="1">Autoinducer-2 production protein LuxS</fullName>
    </alternativeName>
</protein>
<feature type="chain" id="PRO_0000172276" description="S-ribosylhomocysteine lyase">
    <location>
        <begin position="1"/>
        <end position="172"/>
    </location>
</feature>
<feature type="binding site" evidence="1">
    <location>
        <position position="54"/>
    </location>
    <ligand>
        <name>Fe cation</name>
        <dbReference type="ChEBI" id="CHEBI:24875"/>
    </ligand>
</feature>
<feature type="binding site" evidence="1">
    <location>
        <position position="58"/>
    </location>
    <ligand>
        <name>Fe cation</name>
        <dbReference type="ChEBI" id="CHEBI:24875"/>
    </ligand>
</feature>
<feature type="binding site" evidence="1">
    <location>
        <position position="128"/>
    </location>
    <ligand>
        <name>Fe cation</name>
        <dbReference type="ChEBI" id="CHEBI:24875"/>
    </ligand>
</feature>
<proteinExistence type="inferred from homology"/>
<evidence type="ECO:0000255" key="1">
    <source>
        <dbReference type="HAMAP-Rule" id="MF_00091"/>
    </source>
</evidence>
<dbReference type="EC" id="4.4.1.21" evidence="1"/>
<dbReference type="EMBL" id="BA000031">
    <property type="protein sequence ID" value="BAC60800.1"/>
    <property type="molecule type" value="Genomic_DNA"/>
</dbReference>
<dbReference type="RefSeq" id="NP_798916.1">
    <property type="nucleotide sequence ID" value="NC_004603.1"/>
</dbReference>
<dbReference type="RefSeq" id="WP_005462534.1">
    <property type="nucleotide sequence ID" value="NC_004603.1"/>
</dbReference>
<dbReference type="SMR" id="Q87LS4"/>
<dbReference type="GeneID" id="1190052"/>
<dbReference type="KEGG" id="vpa:VP2537"/>
<dbReference type="PATRIC" id="fig|223926.6.peg.2434"/>
<dbReference type="eggNOG" id="COG1854">
    <property type="taxonomic scope" value="Bacteria"/>
</dbReference>
<dbReference type="HOGENOM" id="CLU_107531_2_0_6"/>
<dbReference type="Proteomes" id="UP000002493">
    <property type="component" value="Chromosome 1"/>
</dbReference>
<dbReference type="GO" id="GO:0005506">
    <property type="term" value="F:iron ion binding"/>
    <property type="evidence" value="ECO:0007669"/>
    <property type="project" value="InterPro"/>
</dbReference>
<dbReference type="GO" id="GO:0043768">
    <property type="term" value="F:S-ribosylhomocysteine lyase activity"/>
    <property type="evidence" value="ECO:0007669"/>
    <property type="project" value="UniProtKB-UniRule"/>
</dbReference>
<dbReference type="GO" id="GO:0009372">
    <property type="term" value="P:quorum sensing"/>
    <property type="evidence" value="ECO:0007669"/>
    <property type="project" value="UniProtKB-UniRule"/>
</dbReference>
<dbReference type="FunFam" id="3.30.1360.80:FF:000001">
    <property type="entry name" value="S-ribosylhomocysteine lyase"/>
    <property type="match status" value="1"/>
</dbReference>
<dbReference type="Gene3D" id="3.30.1360.80">
    <property type="entry name" value="S-ribosylhomocysteinase (LuxS)"/>
    <property type="match status" value="1"/>
</dbReference>
<dbReference type="HAMAP" id="MF_00091">
    <property type="entry name" value="LuxS"/>
    <property type="match status" value="1"/>
</dbReference>
<dbReference type="InterPro" id="IPR037005">
    <property type="entry name" value="LuxS_sf"/>
</dbReference>
<dbReference type="InterPro" id="IPR011249">
    <property type="entry name" value="Metalloenz_LuxS/M16"/>
</dbReference>
<dbReference type="InterPro" id="IPR003815">
    <property type="entry name" value="S-ribosylhomocysteinase"/>
</dbReference>
<dbReference type="NCBIfam" id="NF002602">
    <property type="entry name" value="PRK02260.1-2"/>
    <property type="match status" value="1"/>
</dbReference>
<dbReference type="PANTHER" id="PTHR35799">
    <property type="entry name" value="S-RIBOSYLHOMOCYSTEINE LYASE"/>
    <property type="match status" value="1"/>
</dbReference>
<dbReference type="PANTHER" id="PTHR35799:SF1">
    <property type="entry name" value="S-RIBOSYLHOMOCYSTEINE LYASE"/>
    <property type="match status" value="1"/>
</dbReference>
<dbReference type="Pfam" id="PF02664">
    <property type="entry name" value="LuxS"/>
    <property type="match status" value="1"/>
</dbReference>
<dbReference type="PIRSF" id="PIRSF006160">
    <property type="entry name" value="AI2"/>
    <property type="match status" value="1"/>
</dbReference>
<dbReference type="PRINTS" id="PR01487">
    <property type="entry name" value="LUXSPROTEIN"/>
</dbReference>
<dbReference type="SUPFAM" id="SSF63411">
    <property type="entry name" value="LuxS/MPP-like metallohydrolase"/>
    <property type="match status" value="1"/>
</dbReference>
<keyword id="KW-0071">Autoinducer synthesis</keyword>
<keyword id="KW-0408">Iron</keyword>
<keyword id="KW-0456">Lyase</keyword>
<keyword id="KW-0479">Metal-binding</keyword>
<keyword id="KW-0673">Quorum sensing</keyword>
<gene>
    <name evidence="1" type="primary">luxS</name>
    <name type="ordered locus">VP2537</name>
</gene>
<accession>Q87LS4</accession>
<organism>
    <name type="scientific">Vibrio parahaemolyticus serotype O3:K6 (strain RIMD 2210633)</name>
    <dbReference type="NCBI Taxonomy" id="223926"/>
    <lineage>
        <taxon>Bacteria</taxon>
        <taxon>Pseudomonadati</taxon>
        <taxon>Pseudomonadota</taxon>
        <taxon>Gammaproteobacteria</taxon>
        <taxon>Vibrionales</taxon>
        <taxon>Vibrionaceae</taxon>
        <taxon>Vibrio</taxon>
    </lineage>
</organism>
<sequence>MPLLDSFTVDHTRMNAPAVRVAKTMQTPKGDTITVFDLRFTAPNKDILSEKGIHTLEHLYAGFMRNHLNGDSVEIIDISPMGCRTGFYMSLIGTPSEQQVADAWLASMEDVLKVESQNKIPELNEYQCGTAAMHSLEEAQQIAKNILAAGVSVNKNDELALPESMLKELRVD</sequence>
<name>LUXS_VIBPA</name>